<accession>B0TJB0</accession>
<reference key="1">
    <citation type="submission" date="2008-01" db="EMBL/GenBank/DDBJ databases">
        <title>Complete sequence of Shewanella halifaxensis HAW-EB4.</title>
        <authorList>
            <consortium name="US DOE Joint Genome Institute"/>
            <person name="Copeland A."/>
            <person name="Lucas S."/>
            <person name="Lapidus A."/>
            <person name="Glavina del Rio T."/>
            <person name="Dalin E."/>
            <person name="Tice H."/>
            <person name="Bruce D."/>
            <person name="Goodwin L."/>
            <person name="Pitluck S."/>
            <person name="Sims D."/>
            <person name="Brettin T."/>
            <person name="Detter J.C."/>
            <person name="Han C."/>
            <person name="Kuske C.R."/>
            <person name="Schmutz J."/>
            <person name="Larimer F."/>
            <person name="Land M."/>
            <person name="Hauser L."/>
            <person name="Kyrpides N."/>
            <person name="Kim E."/>
            <person name="Zhao J.-S."/>
            <person name="Richardson P."/>
        </authorList>
    </citation>
    <scope>NUCLEOTIDE SEQUENCE [LARGE SCALE GENOMIC DNA]</scope>
    <source>
        <strain>HAW-EB4</strain>
    </source>
</reference>
<feature type="chain" id="PRO_1000076931" description="Lipoprotein signal peptidase">
    <location>
        <begin position="1"/>
        <end position="170"/>
    </location>
</feature>
<feature type="transmembrane region" description="Helical" evidence="1">
    <location>
        <begin position="12"/>
        <end position="32"/>
    </location>
</feature>
<feature type="transmembrane region" description="Helical" evidence="1">
    <location>
        <begin position="67"/>
        <end position="87"/>
    </location>
</feature>
<feature type="transmembrane region" description="Helical" evidence="1">
    <location>
        <begin position="94"/>
        <end position="116"/>
    </location>
</feature>
<feature type="transmembrane region" description="Helical" evidence="1">
    <location>
        <begin position="133"/>
        <end position="153"/>
    </location>
</feature>
<feature type="active site" evidence="1">
    <location>
        <position position="123"/>
    </location>
</feature>
<feature type="active site" evidence="1">
    <location>
        <position position="141"/>
    </location>
</feature>
<organism>
    <name type="scientific">Shewanella halifaxensis (strain HAW-EB4)</name>
    <dbReference type="NCBI Taxonomy" id="458817"/>
    <lineage>
        <taxon>Bacteria</taxon>
        <taxon>Pseudomonadati</taxon>
        <taxon>Pseudomonadota</taxon>
        <taxon>Gammaproteobacteria</taxon>
        <taxon>Alteromonadales</taxon>
        <taxon>Shewanellaceae</taxon>
        <taxon>Shewanella</taxon>
    </lineage>
</organism>
<name>LSPA_SHEHH</name>
<comment type="function">
    <text evidence="1">This protein specifically catalyzes the removal of signal peptides from prolipoproteins.</text>
</comment>
<comment type="catalytic activity">
    <reaction evidence="1">
        <text>Release of signal peptides from bacterial membrane prolipoproteins. Hydrolyzes -Xaa-Yaa-Zaa-|-(S,diacylglyceryl)Cys-, in which Xaa is hydrophobic (preferably Leu), and Yaa (Ala or Ser) and Zaa (Gly or Ala) have small, neutral side chains.</text>
        <dbReference type="EC" id="3.4.23.36"/>
    </reaction>
</comment>
<comment type="pathway">
    <text evidence="1">Protein modification; lipoprotein biosynthesis (signal peptide cleavage).</text>
</comment>
<comment type="subcellular location">
    <subcellularLocation>
        <location evidence="1">Cell inner membrane</location>
        <topology evidence="1">Multi-pass membrane protein</topology>
    </subcellularLocation>
</comment>
<comment type="similarity">
    <text evidence="1">Belongs to the peptidase A8 family.</text>
</comment>
<dbReference type="EC" id="3.4.23.36" evidence="1"/>
<dbReference type="EMBL" id="CP000931">
    <property type="protein sequence ID" value="ABZ75701.1"/>
    <property type="molecule type" value="Genomic_DNA"/>
</dbReference>
<dbReference type="RefSeq" id="WP_012276245.1">
    <property type="nucleotide sequence ID" value="NC_010334.1"/>
</dbReference>
<dbReference type="SMR" id="B0TJB0"/>
<dbReference type="STRING" id="458817.Shal_1132"/>
<dbReference type="MEROPS" id="A08.001"/>
<dbReference type="KEGG" id="shl:Shal_1132"/>
<dbReference type="eggNOG" id="COG0597">
    <property type="taxonomic scope" value="Bacteria"/>
</dbReference>
<dbReference type="HOGENOM" id="CLU_083252_4_0_6"/>
<dbReference type="OrthoDB" id="9810259at2"/>
<dbReference type="UniPathway" id="UPA00665"/>
<dbReference type="Proteomes" id="UP000001317">
    <property type="component" value="Chromosome"/>
</dbReference>
<dbReference type="GO" id="GO:0005886">
    <property type="term" value="C:plasma membrane"/>
    <property type="evidence" value="ECO:0007669"/>
    <property type="project" value="UniProtKB-SubCell"/>
</dbReference>
<dbReference type="GO" id="GO:0004190">
    <property type="term" value="F:aspartic-type endopeptidase activity"/>
    <property type="evidence" value="ECO:0007669"/>
    <property type="project" value="UniProtKB-UniRule"/>
</dbReference>
<dbReference type="GO" id="GO:0006508">
    <property type="term" value="P:proteolysis"/>
    <property type="evidence" value="ECO:0007669"/>
    <property type="project" value="UniProtKB-KW"/>
</dbReference>
<dbReference type="HAMAP" id="MF_00161">
    <property type="entry name" value="LspA"/>
    <property type="match status" value="1"/>
</dbReference>
<dbReference type="InterPro" id="IPR001872">
    <property type="entry name" value="Peptidase_A8"/>
</dbReference>
<dbReference type="NCBIfam" id="TIGR00077">
    <property type="entry name" value="lspA"/>
    <property type="match status" value="1"/>
</dbReference>
<dbReference type="PANTHER" id="PTHR33695">
    <property type="entry name" value="LIPOPROTEIN SIGNAL PEPTIDASE"/>
    <property type="match status" value="1"/>
</dbReference>
<dbReference type="PANTHER" id="PTHR33695:SF1">
    <property type="entry name" value="LIPOPROTEIN SIGNAL PEPTIDASE"/>
    <property type="match status" value="1"/>
</dbReference>
<dbReference type="Pfam" id="PF01252">
    <property type="entry name" value="Peptidase_A8"/>
    <property type="match status" value="1"/>
</dbReference>
<dbReference type="PRINTS" id="PR00781">
    <property type="entry name" value="LIPOSIGPTASE"/>
</dbReference>
<dbReference type="PROSITE" id="PS00855">
    <property type="entry name" value="SPASE_II"/>
    <property type="match status" value="1"/>
</dbReference>
<sequence>MPTNWKDSGLRWYWVVVLVFVADQLSKQWVLSNFELYESIQLLPIFNFTYVRNYGAAFSFLSDAGGWQRWLFTFVAVGFSVVLSVWLRQQPSKMWRLNLAYTLVIGGALGNLIDRLQHGFVVDFLDFYWNTSHFPAFNIADSAICVGAALIILDSFVTGKDDKKTDGIKE</sequence>
<protein>
    <recommendedName>
        <fullName evidence="1">Lipoprotein signal peptidase</fullName>
        <ecNumber evidence="1">3.4.23.36</ecNumber>
    </recommendedName>
    <alternativeName>
        <fullName evidence="1">Prolipoprotein signal peptidase</fullName>
    </alternativeName>
    <alternativeName>
        <fullName evidence="1">Signal peptidase II</fullName>
        <shortName evidence="1">SPase II</shortName>
    </alternativeName>
</protein>
<evidence type="ECO:0000255" key="1">
    <source>
        <dbReference type="HAMAP-Rule" id="MF_00161"/>
    </source>
</evidence>
<keyword id="KW-0064">Aspartyl protease</keyword>
<keyword id="KW-0997">Cell inner membrane</keyword>
<keyword id="KW-1003">Cell membrane</keyword>
<keyword id="KW-0378">Hydrolase</keyword>
<keyword id="KW-0472">Membrane</keyword>
<keyword id="KW-0645">Protease</keyword>
<keyword id="KW-0812">Transmembrane</keyword>
<keyword id="KW-1133">Transmembrane helix</keyword>
<proteinExistence type="inferred from homology"/>
<gene>
    <name evidence="1" type="primary">lspA</name>
    <name type="ordered locus">Shal_1132</name>
</gene>